<sequence>MRFTKMNGLGNDFVIIDAVTQNIHLTSENIRYLSDRFYGVGFDQLLIVEPPYDPAIDFHCRIYNSDGTEVNQCGNGMRCVAQFVCLKKLTNKRNIHISTRANHIILSIMNDNRVSVNMGAPIFDPKLIPFYISQYQKTYILFLPTQIILCGVVSMGNPHCIILVEKIENIQVTSLGSALEDHHCFPERVNVSFMQIINCNNIRLRVYERGVGETQACGTAACAAVAVGIQQGLLYESVNVNLPGGTISVNWKGASNALYMTGSTSYVYDGYINL</sequence>
<keyword id="KW-0028">Amino-acid biosynthesis</keyword>
<keyword id="KW-0963">Cytoplasm</keyword>
<keyword id="KW-0413">Isomerase</keyword>
<keyword id="KW-0457">Lysine biosynthesis</keyword>
<keyword id="KW-1185">Reference proteome</keyword>
<gene>
    <name evidence="1" type="primary">dapF</name>
    <name type="ordered locus">BPEN_600</name>
</gene>
<dbReference type="EC" id="5.1.1.7" evidence="1"/>
<dbReference type="EMBL" id="CP000016">
    <property type="protein sequence ID" value="AAZ41205.1"/>
    <property type="molecule type" value="Genomic_DNA"/>
</dbReference>
<dbReference type="RefSeq" id="WP_011283116.1">
    <property type="nucleotide sequence ID" value="NC_007292.1"/>
</dbReference>
<dbReference type="SMR" id="Q491Z7"/>
<dbReference type="STRING" id="291272.BPEN_600"/>
<dbReference type="KEGG" id="bpn:BPEN_600"/>
<dbReference type="eggNOG" id="COG0253">
    <property type="taxonomic scope" value="Bacteria"/>
</dbReference>
<dbReference type="HOGENOM" id="CLU_053306_1_1_6"/>
<dbReference type="OrthoDB" id="9805408at2"/>
<dbReference type="UniPathway" id="UPA00034">
    <property type="reaction ID" value="UER00025"/>
</dbReference>
<dbReference type="Proteomes" id="UP000007794">
    <property type="component" value="Chromosome"/>
</dbReference>
<dbReference type="GO" id="GO:0005829">
    <property type="term" value="C:cytosol"/>
    <property type="evidence" value="ECO:0007669"/>
    <property type="project" value="TreeGrafter"/>
</dbReference>
<dbReference type="GO" id="GO:0008837">
    <property type="term" value="F:diaminopimelate epimerase activity"/>
    <property type="evidence" value="ECO:0007669"/>
    <property type="project" value="UniProtKB-UniRule"/>
</dbReference>
<dbReference type="GO" id="GO:0009089">
    <property type="term" value="P:lysine biosynthetic process via diaminopimelate"/>
    <property type="evidence" value="ECO:0007669"/>
    <property type="project" value="UniProtKB-UniRule"/>
</dbReference>
<dbReference type="FunFam" id="3.10.310.10:FF:000001">
    <property type="entry name" value="Diaminopimelate epimerase"/>
    <property type="match status" value="1"/>
</dbReference>
<dbReference type="Gene3D" id="3.10.310.10">
    <property type="entry name" value="Diaminopimelate Epimerase, Chain A, domain 1"/>
    <property type="match status" value="2"/>
</dbReference>
<dbReference type="HAMAP" id="MF_00197">
    <property type="entry name" value="DAP_epimerase"/>
    <property type="match status" value="1"/>
</dbReference>
<dbReference type="InterPro" id="IPR018510">
    <property type="entry name" value="DAP_epimerase_AS"/>
</dbReference>
<dbReference type="InterPro" id="IPR001653">
    <property type="entry name" value="DAP_epimerase_DapF"/>
</dbReference>
<dbReference type="NCBIfam" id="TIGR00652">
    <property type="entry name" value="DapF"/>
    <property type="match status" value="1"/>
</dbReference>
<dbReference type="PANTHER" id="PTHR31689:SF0">
    <property type="entry name" value="DIAMINOPIMELATE EPIMERASE"/>
    <property type="match status" value="1"/>
</dbReference>
<dbReference type="PANTHER" id="PTHR31689">
    <property type="entry name" value="DIAMINOPIMELATE EPIMERASE, CHLOROPLASTIC"/>
    <property type="match status" value="1"/>
</dbReference>
<dbReference type="Pfam" id="PF01678">
    <property type="entry name" value="DAP_epimerase"/>
    <property type="match status" value="2"/>
</dbReference>
<dbReference type="SUPFAM" id="SSF54506">
    <property type="entry name" value="Diaminopimelate epimerase-like"/>
    <property type="match status" value="2"/>
</dbReference>
<dbReference type="PROSITE" id="PS01326">
    <property type="entry name" value="DAP_EPIMERASE"/>
    <property type="match status" value="1"/>
</dbReference>
<feature type="chain" id="PRO_1000058540" description="Diaminopimelate epimerase">
    <location>
        <begin position="1"/>
        <end position="274"/>
    </location>
</feature>
<feature type="active site" description="Proton donor" evidence="1">
    <location>
        <position position="73"/>
    </location>
</feature>
<feature type="active site" description="Proton acceptor" evidence="1">
    <location>
        <position position="217"/>
    </location>
</feature>
<feature type="binding site" evidence="1">
    <location>
        <position position="11"/>
    </location>
    <ligand>
        <name>substrate</name>
    </ligand>
</feature>
<feature type="binding site" evidence="1">
    <location>
        <position position="44"/>
    </location>
    <ligand>
        <name>substrate</name>
    </ligand>
</feature>
<feature type="binding site" evidence="1">
    <location>
        <position position="64"/>
    </location>
    <ligand>
        <name>substrate</name>
    </ligand>
</feature>
<feature type="binding site" evidence="1">
    <location>
        <begin position="74"/>
        <end position="75"/>
    </location>
    <ligand>
        <name>substrate</name>
    </ligand>
</feature>
<feature type="binding site" evidence="1">
    <location>
        <position position="157"/>
    </location>
    <ligand>
        <name>substrate</name>
    </ligand>
</feature>
<feature type="binding site" evidence="1">
    <location>
        <position position="190"/>
    </location>
    <ligand>
        <name>substrate</name>
    </ligand>
</feature>
<feature type="binding site" evidence="1">
    <location>
        <begin position="208"/>
        <end position="209"/>
    </location>
    <ligand>
        <name>substrate</name>
    </ligand>
</feature>
<feature type="binding site" evidence="1">
    <location>
        <begin position="218"/>
        <end position="219"/>
    </location>
    <ligand>
        <name>substrate</name>
    </ligand>
</feature>
<feature type="site" description="Could be important to modulate the pK values of the two catalytic cysteine residues" evidence="1">
    <location>
        <position position="159"/>
    </location>
</feature>
<feature type="site" description="Could be important to modulate the pK values of the two catalytic cysteine residues" evidence="1">
    <location>
        <position position="208"/>
    </location>
</feature>
<feature type="site" description="Important for dimerization" evidence="1">
    <location>
        <position position="268"/>
    </location>
</feature>
<proteinExistence type="inferred from homology"/>
<protein>
    <recommendedName>
        <fullName evidence="1">Diaminopimelate epimerase</fullName>
        <shortName evidence="1">DAP epimerase</shortName>
        <ecNumber evidence="1">5.1.1.7</ecNumber>
    </recommendedName>
    <alternativeName>
        <fullName evidence="1">PLP-independent amino acid racemase</fullName>
    </alternativeName>
</protein>
<comment type="function">
    <text evidence="1">Catalyzes the stereoinversion of LL-2,6-diaminopimelate (L,L-DAP) to meso-diaminopimelate (meso-DAP), a precursor of L-lysine and an essential component of the bacterial peptidoglycan.</text>
</comment>
<comment type="catalytic activity">
    <reaction evidence="1">
        <text>(2S,6S)-2,6-diaminopimelate = meso-2,6-diaminopimelate</text>
        <dbReference type="Rhea" id="RHEA:15393"/>
        <dbReference type="ChEBI" id="CHEBI:57609"/>
        <dbReference type="ChEBI" id="CHEBI:57791"/>
        <dbReference type="EC" id="5.1.1.7"/>
    </reaction>
</comment>
<comment type="pathway">
    <text evidence="1">Amino-acid biosynthesis; L-lysine biosynthesis via DAP pathway; DL-2,6-diaminopimelate from LL-2,6-diaminopimelate: step 1/1.</text>
</comment>
<comment type="subunit">
    <text evidence="1">Homodimer.</text>
</comment>
<comment type="subcellular location">
    <subcellularLocation>
        <location evidence="1">Cytoplasm</location>
    </subcellularLocation>
</comment>
<comment type="similarity">
    <text evidence="1">Belongs to the diaminopimelate epimerase family.</text>
</comment>
<evidence type="ECO:0000255" key="1">
    <source>
        <dbReference type="HAMAP-Rule" id="MF_00197"/>
    </source>
</evidence>
<accession>Q491Z7</accession>
<name>DAPF_BLOPB</name>
<organism>
    <name type="scientific">Blochmanniella pennsylvanica (strain BPEN)</name>
    <dbReference type="NCBI Taxonomy" id="291272"/>
    <lineage>
        <taxon>Bacteria</taxon>
        <taxon>Pseudomonadati</taxon>
        <taxon>Pseudomonadota</taxon>
        <taxon>Gammaproteobacteria</taxon>
        <taxon>Enterobacterales</taxon>
        <taxon>Enterobacteriaceae</taxon>
        <taxon>ant endosymbionts</taxon>
        <taxon>Candidatus Blochmanniella</taxon>
    </lineage>
</organism>
<reference key="1">
    <citation type="journal article" date="2005" name="Genome Res.">
        <title>Genome sequence of Blochmannia pennsylvanicus indicates parallel evolutionary trends among bacterial mutualists of insects.</title>
        <authorList>
            <person name="Degnan P.H."/>
            <person name="Lazarus A.B."/>
            <person name="Wernegreen J.J."/>
        </authorList>
    </citation>
    <scope>NUCLEOTIDE SEQUENCE [LARGE SCALE GENOMIC DNA]</scope>
    <source>
        <strain>BPEN</strain>
    </source>
</reference>